<sequence length="1075" mass="113374">MLKPQPLQQPSQPQQPPPTQQAVARRPPGGTSPPNGGLPGPLATSAAPPGPPAAASPCLGPVAAAGSGLRRGAEGILAPQPPPPQQHQERPGAAAIGSARGQSTGKGPPQSPVFEGVYNNSRMLHFLTAVVGSTCDVKVKNGTTYEGIFKTLSSKFELAVDAVHRKASEPAGGPRREDIVDTMVFKPSDVMLVHFRNVDFNYATKDKFTDSAIAMNSKVNGEHKEKVLQRWEGGDSNSDDYDLESDMSNGWDPNEMFKFNEENYGVKTTYDSSLSSYTVPLEKDNSEEFRQRELRAAQLAREIESSPQYRLRIAMENDDGRTEEEKHSAVQRQGSGRESPSLASREGKYIPLPQRVREGPRGGVRCSSSRGGRPGLSSLPPRGPHHLDNSSPGPGSEARGINGGPSRMSPKAQRPLRGAKTLSSPSNRPSGETSVPPPPAVGRMYPPRSPKSAAPAPISASCPEPPIGSAVPTSSASIPVTSSVSDPGVGSISPASPKISLAPTDVKELSTKEPGRTLEPQELARIAGKVPGLQNEQKRFQLEELRKFGAQFKLQPSSSPENSLDPFPPRILKEEPKGKEKEVDGLLTSEPMGSPVSSKTESVSDKEDKPPLAPSGGTEGPEQPPPPCPSQTGSPPVGLIKGEDKDEGPVAEQVKKSTLNPNAKEFNPTKPLLSVNKSTSTPTSPGPRTHSTPSIPVLTAGQSGLYSPQYISYIPQIHMGPAVQAPQMYPYPVSNSVPGQQGKYRGAKGSLPPQRSDQHQPASAPPMMQAAAAAGPPLVAATPYSSYIPYNPQQFPGQPAMMQPMAHYPSQPVFAPMLQSNPRMLTSGSHPQAIVSSSTPQYPSAEQPTPQALYATVHQSYPHHATQLHAHQPQPATTPTGSQPQSQHAAPSPVQHQAGQAPHLGSGQPQQNLYHPGALTGTPPSLPPGPSAQSPQSSFPQPAAVYAIHHQQLPHGFTNMAHVTQAHVQTGITAAPPPHPGAPHPPQVMLLHPPQSHGGPPQGAVPQSGVPALSASTPSPYPYIGHPQGEQPGQAPGFPGGADDRIREFSLAGGIWHGRAEGLQVGQDARVLGGE</sequence>
<proteinExistence type="evidence at protein level"/>
<reference key="1">
    <citation type="journal article" date="2002" name="J. Biol. Chem.">
        <title>Cloning and characterization of a family of proteins associated with Mpl.</title>
        <authorList>
            <person name="Meunier C.F."/>
            <person name="Bordereaux D."/>
            <person name="Porteu F."/>
            <person name="Gisselbrecht S."/>
            <person name="Chretien S."/>
            <person name="Courtois G."/>
        </authorList>
    </citation>
    <scope>NUCLEOTIDE SEQUENCE [MRNA] (ISOFORMS 1; 2; 3; 4 AND 5)</scope>
    <scope>SUBCELLULAR LOCATION</scope>
    <scope>PHOSPHORYLATION</scope>
    <scope>TISSUE SPECIFICITY</scope>
    <scope>INTERACTION WITH MPL AND EPOR</scope>
</reference>
<reference key="2">
    <citation type="journal article" date="2003" name="Exp. Neurol.">
        <title>Identification and expression of the gene for human ataxin-2-related protein on chromosome 16.</title>
        <authorList>
            <person name="Figueroa K.P."/>
            <person name="Pulst S.M."/>
        </authorList>
    </citation>
    <scope>NUCLEOTIDE SEQUENCE [MRNA] (ISOFORM 1)</scope>
</reference>
<reference key="3">
    <citation type="submission" date="1997-11" db="EMBL/GenBank/DDBJ databases">
        <title>A splicing form of human ataxin-2 like gene obtained from adult brain.</title>
        <authorList>
            <person name="Xia J.-H."/>
            <person name="Liu C.-Y."/>
            <person name="Wang D.-A."/>
            <person name="Ruan Q.-G."/>
            <person name="Deng H.-X."/>
        </authorList>
    </citation>
    <scope>NUCLEOTIDE SEQUENCE [MRNA] (ISOFORM 6)</scope>
    <source>
        <tissue>Brain</tissue>
    </source>
</reference>
<reference key="4">
    <citation type="journal article" date="2004" name="Nat. Genet.">
        <title>Complete sequencing and characterization of 21,243 full-length human cDNAs.</title>
        <authorList>
            <person name="Ota T."/>
            <person name="Suzuki Y."/>
            <person name="Nishikawa T."/>
            <person name="Otsuki T."/>
            <person name="Sugiyama T."/>
            <person name="Irie R."/>
            <person name="Wakamatsu A."/>
            <person name="Hayashi K."/>
            <person name="Sato H."/>
            <person name="Nagai K."/>
            <person name="Kimura K."/>
            <person name="Makita H."/>
            <person name="Sekine M."/>
            <person name="Obayashi M."/>
            <person name="Nishi T."/>
            <person name="Shibahara T."/>
            <person name="Tanaka T."/>
            <person name="Ishii S."/>
            <person name="Yamamoto J."/>
            <person name="Saito K."/>
            <person name="Kawai Y."/>
            <person name="Isono Y."/>
            <person name="Nakamura Y."/>
            <person name="Nagahari K."/>
            <person name="Murakami K."/>
            <person name="Yasuda T."/>
            <person name="Iwayanagi T."/>
            <person name="Wagatsuma M."/>
            <person name="Shiratori A."/>
            <person name="Sudo H."/>
            <person name="Hosoiri T."/>
            <person name="Kaku Y."/>
            <person name="Kodaira H."/>
            <person name="Kondo H."/>
            <person name="Sugawara M."/>
            <person name="Takahashi M."/>
            <person name="Kanda K."/>
            <person name="Yokoi T."/>
            <person name="Furuya T."/>
            <person name="Kikkawa E."/>
            <person name="Omura Y."/>
            <person name="Abe K."/>
            <person name="Kamihara K."/>
            <person name="Katsuta N."/>
            <person name="Sato K."/>
            <person name="Tanikawa M."/>
            <person name="Yamazaki M."/>
            <person name="Ninomiya K."/>
            <person name="Ishibashi T."/>
            <person name="Yamashita H."/>
            <person name="Murakawa K."/>
            <person name="Fujimori K."/>
            <person name="Tanai H."/>
            <person name="Kimata M."/>
            <person name="Watanabe M."/>
            <person name="Hiraoka S."/>
            <person name="Chiba Y."/>
            <person name="Ishida S."/>
            <person name="Ono Y."/>
            <person name="Takiguchi S."/>
            <person name="Watanabe S."/>
            <person name="Yosida M."/>
            <person name="Hotuta T."/>
            <person name="Kusano J."/>
            <person name="Kanehori K."/>
            <person name="Takahashi-Fujii A."/>
            <person name="Hara H."/>
            <person name="Tanase T.-O."/>
            <person name="Nomura Y."/>
            <person name="Togiya S."/>
            <person name="Komai F."/>
            <person name="Hara R."/>
            <person name="Takeuchi K."/>
            <person name="Arita M."/>
            <person name="Imose N."/>
            <person name="Musashino K."/>
            <person name="Yuuki H."/>
            <person name="Oshima A."/>
            <person name="Sasaki N."/>
            <person name="Aotsuka S."/>
            <person name="Yoshikawa Y."/>
            <person name="Matsunawa H."/>
            <person name="Ichihara T."/>
            <person name="Shiohata N."/>
            <person name="Sano S."/>
            <person name="Moriya S."/>
            <person name="Momiyama H."/>
            <person name="Satoh N."/>
            <person name="Takami S."/>
            <person name="Terashima Y."/>
            <person name="Suzuki O."/>
            <person name="Nakagawa S."/>
            <person name="Senoh A."/>
            <person name="Mizoguchi H."/>
            <person name="Goto Y."/>
            <person name="Shimizu F."/>
            <person name="Wakebe H."/>
            <person name="Hishigaki H."/>
            <person name="Watanabe T."/>
            <person name="Sugiyama A."/>
            <person name="Takemoto M."/>
            <person name="Kawakami B."/>
            <person name="Yamazaki M."/>
            <person name="Watanabe K."/>
            <person name="Kumagai A."/>
            <person name="Itakura S."/>
            <person name="Fukuzumi Y."/>
            <person name="Fujimori Y."/>
            <person name="Komiyama M."/>
            <person name="Tashiro H."/>
            <person name="Tanigami A."/>
            <person name="Fujiwara T."/>
            <person name="Ono T."/>
            <person name="Yamada K."/>
            <person name="Fujii Y."/>
            <person name="Ozaki K."/>
            <person name="Hirao M."/>
            <person name="Ohmori Y."/>
            <person name="Kawabata A."/>
            <person name="Hikiji T."/>
            <person name="Kobatake N."/>
            <person name="Inagaki H."/>
            <person name="Ikema Y."/>
            <person name="Okamoto S."/>
            <person name="Okitani R."/>
            <person name="Kawakami T."/>
            <person name="Noguchi S."/>
            <person name="Itoh T."/>
            <person name="Shigeta K."/>
            <person name="Senba T."/>
            <person name="Matsumura K."/>
            <person name="Nakajima Y."/>
            <person name="Mizuno T."/>
            <person name="Morinaga M."/>
            <person name="Sasaki M."/>
            <person name="Togashi T."/>
            <person name="Oyama M."/>
            <person name="Hata H."/>
            <person name="Watanabe M."/>
            <person name="Komatsu T."/>
            <person name="Mizushima-Sugano J."/>
            <person name="Satoh T."/>
            <person name="Shirai Y."/>
            <person name="Takahashi Y."/>
            <person name="Nakagawa K."/>
            <person name="Okumura K."/>
            <person name="Nagase T."/>
            <person name="Nomura N."/>
            <person name="Kikuchi H."/>
            <person name="Masuho Y."/>
            <person name="Yamashita R."/>
            <person name="Nakai K."/>
            <person name="Yada T."/>
            <person name="Nakamura Y."/>
            <person name="Ohara O."/>
            <person name="Isogai T."/>
            <person name="Sugano S."/>
        </authorList>
    </citation>
    <scope>NUCLEOTIDE SEQUENCE [LARGE SCALE MRNA] (ISOFORM 8)</scope>
    <source>
        <tissue>Hippocampus</tissue>
    </source>
</reference>
<reference key="5">
    <citation type="journal article" date="2004" name="Nature">
        <title>The sequence and analysis of duplication-rich human chromosome 16.</title>
        <authorList>
            <person name="Martin J."/>
            <person name="Han C."/>
            <person name="Gordon L.A."/>
            <person name="Terry A."/>
            <person name="Prabhakar S."/>
            <person name="She X."/>
            <person name="Xie G."/>
            <person name="Hellsten U."/>
            <person name="Chan Y.M."/>
            <person name="Altherr M."/>
            <person name="Couronne O."/>
            <person name="Aerts A."/>
            <person name="Bajorek E."/>
            <person name="Black S."/>
            <person name="Blumer H."/>
            <person name="Branscomb E."/>
            <person name="Brown N.C."/>
            <person name="Bruno W.J."/>
            <person name="Buckingham J.M."/>
            <person name="Callen D.F."/>
            <person name="Campbell C.S."/>
            <person name="Campbell M.L."/>
            <person name="Campbell E.W."/>
            <person name="Caoile C."/>
            <person name="Challacombe J.F."/>
            <person name="Chasteen L.A."/>
            <person name="Chertkov O."/>
            <person name="Chi H.C."/>
            <person name="Christensen M."/>
            <person name="Clark L.M."/>
            <person name="Cohn J.D."/>
            <person name="Denys M."/>
            <person name="Detter J.C."/>
            <person name="Dickson M."/>
            <person name="Dimitrijevic-Bussod M."/>
            <person name="Escobar J."/>
            <person name="Fawcett J.J."/>
            <person name="Flowers D."/>
            <person name="Fotopulos D."/>
            <person name="Glavina T."/>
            <person name="Gomez M."/>
            <person name="Gonzales E."/>
            <person name="Goodstein D."/>
            <person name="Goodwin L.A."/>
            <person name="Grady D.L."/>
            <person name="Grigoriev I."/>
            <person name="Groza M."/>
            <person name="Hammon N."/>
            <person name="Hawkins T."/>
            <person name="Haydu L."/>
            <person name="Hildebrand C.E."/>
            <person name="Huang W."/>
            <person name="Israni S."/>
            <person name="Jett J."/>
            <person name="Jewett P.B."/>
            <person name="Kadner K."/>
            <person name="Kimball H."/>
            <person name="Kobayashi A."/>
            <person name="Krawczyk M.-C."/>
            <person name="Leyba T."/>
            <person name="Longmire J.L."/>
            <person name="Lopez F."/>
            <person name="Lou Y."/>
            <person name="Lowry S."/>
            <person name="Ludeman T."/>
            <person name="Manohar C.F."/>
            <person name="Mark G.A."/>
            <person name="McMurray K.L."/>
            <person name="Meincke L.J."/>
            <person name="Morgan J."/>
            <person name="Moyzis R.K."/>
            <person name="Mundt M.O."/>
            <person name="Munk A.C."/>
            <person name="Nandkeshwar R.D."/>
            <person name="Pitluck S."/>
            <person name="Pollard M."/>
            <person name="Predki P."/>
            <person name="Parson-Quintana B."/>
            <person name="Ramirez L."/>
            <person name="Rash S."/>
            <person name="Retterer J."/>
            <person name="Ricke D.O."/>
            <person name="Robinson D.L."/>
            <person name="Rodriguez A."/>
            <person name="Salamov A."/>
            <person name="Saunders E.H."/>
            <person name="Scott D."/>
            <person name="Shough T."/>
            <person name="Stallings R.L."/>
            <person name="Stalvey M."/>
            <person name="Sutherland R.D."/>
            <person name="Tapia R."/>
            <person name="Tesmer J.G."/>
            <person name="Thayer N."/>
            <person name="Thompson L.S."/>
            <person name="Tice H."/>
            <person name="Torney D.C."/>
            <person name="Tran-Gyamfi M."/>
            <person name="Tsai M."/>
            <person name="Ulanovsky L.E."/>
            <person name="Ustaszewska A."/>
            <person name="Vo N."/>
            <person name="White P.S."/>
            <person name="Williams A.L."/>
            <person name="Wills P.L."/>
            <person name="Wu J.-R."/>
            <person name="Wu K."/>
            <person name="Yang J."/>
            <person name="DeJong P."/>
            <person name="Bruce D."/>
            <person name="Doggett N.A."/>
            <person name="Deaven L."/>
            <person name="Schmutz J."/>
            <person name="Grimwood J."/>
            <person name="Richardson P."/>
            <person name="Rokhsar D.S."/>
            <person name="Eichler E.E."/>
            <person name="Gilna P."/>
            <person name="Lucas S.M."/>
            <person name="Myers R.M."/>
            <person name="Rubin E.M."/>
            <person name="Pennacchio L.A."/>
        </authorList>
    </citation>
    <scope>NUCLEOTIDE SEQUENCE [LARGE SCALE GENOMIC DNA]</scope>
</reference>
<reference key="6">
    <citation type="journal article" date="2004" name="Genome Res.">
        <title>The status, quality, and expansion of the NIH full-length cDNA project: the Mammalian Gene Collection (MGC).</title>
        <authorList>
            <consortium name="The MGC Project Team"/>
        </authorList>
    </citation>
    <scope>NUCLEOTIDE SEQUENCE [LARGE SCALE MRNA] (ISOFORMS 1; 4 AND 9)</scope>
    <source>
        <tissue>Lymph</tissue>
        <tissue>Skin</tissue>
        <tissue>Testis</tissue>
    </source>
</reference>
<reference key="7">
    <citation type="submission" date="2007-07" db="UniProtKB">
        <authorList>
            <person name="Bienvenut W.V."/>
            <person name="Heiserich L."/>
            <person name="Boulahbel H."/>
            <person name="Gottlieb E."/>
        </authorList>
    </citation>
    <scope>PROTEIN SEQUENCE OF 1-25; 141-150; 156-165; 197-218; 259-283; 302-310; 383-399; 421-443; 499-507; 517-525; 540-546 AND 554-570</scope>
    <scope>ACETYLATION AT MET-1</scope>
    <scope>IDENTIFICATION BY MASS SPECTROMETRY</scope>
    <source>
        <tissue>Colon carcinoma</tissue>
    </source>
</reference>
<reference key="8">
    <citation type="journal article" date="1996" name="Nat. Genet.">
        <title>Moderate expansion of a normally biallelic trinucleotide repeat in spinocerebellar ataxia type 2.</title>
        <authorList>
            <person name="Pulst S.-M."/>
            <person name="Nechiporuk A."/>
            <person name="Nechiporuk T."/>
            <person name="Gispert S."/>
            <person name="Chen X.-N."/>
            <person name="Lopes-Cendes I."/>
            <person name="Pearlman S."/>
            <person name="Starkman S."/>
            <person name="Orozco-Diaz G."/>
            <person name="Lunkes A."/>
            <person name="DeJong P."/>
            <person name="Rouleau G.A."/>
            <person name="Auburger G."/>
            <person name="Korenberg J.R."/>
            <person name="Figueroa C."/>
            <person name="Sahba S."/>
        </authorList>
    </citation>
    <scope>NUCLEOTIDE SEQUENCE [MRNA] OF 54-1075 (ISOFORM 7)</scope>
</reference>
<reference key="9">
    <citation type="journal article" date="2004" name="Anal. Chem.">
        <title>Robust phosphoproteomic profiling of tyrosine phosphorylation sites from human T cells using immobilized metal affinity chromatography and tandem mass spectrometry.</title>
        <authorList>
            <person name="Brill L.M."/>
            <person name="Salomon A.R."/>
            <person name="Ficarro S.B."/>
            <person name="Mukherji M."/>
            <person name="Stettler-Gill M."/>
            <person name="Peters E.C."/>
        </authorList>
    </citation>
    <scope>PHOSPHORYLATION [LARGE SCALE ANALYSIS] AT SER-111; TYR-264; TYR-309 AND TYR-349</scope>
    <scope>IDENTIFICATION BY MASS SPECTROMETRY [LARGE SCALE ANALYSIS]</scope>
    <source>
        <tissue>Leukemic T-cell</tissue>
    </source>
</reference>
<reference key="10">
    <citation type="journal article" date="2006" name="Cell">
        <title>Global, in vivo, and site-specific phosphorylation dynamics in signaling networks.</title>
        <authorList>
            <person name="Olsen J.V."/>
            <person name="Blagoev B."/>
            <person name="Gnad F."/>
            <person name="Macek B."/>
            <person name="Kumar C."/>
            <person name="Mortensen P."/>
            <person name="Mann M."/>
        </authorList>
    </citation>
    <scope>PHOSPHORYLATION [LARGE SCALE ANALYSIS] AT SER-496 AND SER-594</scope>
    <scope>IDENTIFICATION BY MASS SPECTROMETRY [LARGE SCALE ANALYSIS]</scope>
    <source>
        <tissue>Cervix carcinoma</tissue>
    </source>
</reference>
<reference key="11">
    <citation type="journal article" date="2006" name="Nat. Biotechnol.">
        <title>A probability-based approach for high-throughput protein phosphorylation analysis and site localization.</title>
        <authorList>
            <person name="Beausoleil S.A."/>
            <person name="Villen J."/>
            <person name="Gerber S.A."/>
            <person name="Rush J."/>
            <person name="Gygi S.P."/>
        </authorList>
    </citation>
    <scope>PHOSPHORYLATION [LARGE SCALE ANALYSIS] AT SER-111 AND SER-594</scope>
    <scope>IDENTIFICATION BY MASS SPECTROMETRY [LARGE SCALE ANALYSIS]</scope>
    <source>
        <tissue>Cervix carcinoma</tissue>
    </source>
</reference>
<reference key="12">
    <citation type="journal article" date="2008" name="J. Proteome Res.">
        <title>Combining protein-based IMAC, peptide-based IMAC, and MudPIT for efficient phosphoproteomic analysis.</title>
        <authorList>
            <person name="Cantin G.T."/>
            <person name="Yi W."/>
            <person name="Lu B."/>
            <person name="Park S.K."/>
            <person name="Xu T."/>
            <person name="Lee J.-D."/>
            <person name="Yates J.R. III"/>
        </authorList>
    </citation>
    <scope>PHOSPHORYLATION [LARGE SCALE ANALYSIS] AT SER-111</scope>
    <scope>IDENTIFICATION BY MASS SPECTROMETRY [LARGE SCALE ANALYSIS]</scope>
    <source>
        <tissue>Cervix carcinoma</tissue>
    </source>
</reference>
<reference key="13">
    <citation type="journal article" date="2008" name="Proc. Natl. Acad. Sci. U.S.A.">
        <title>A quantitative atlas of mitotic phosphorylation.</title>
        <authorList>
            <person name="Dephoure N."/>
            <person name="Zhou C."/>
            <person name="Villen J."/>
            <person name="Beausoleil S.A."/>
            <person name="Bakalarski C.E."/>
            <person name="Elledge S.J."/>
            <person name="Gygi S.P."/>
        </authorList>
    </citation>
    <scope>PHOSPHORYLATION [LARGE SCALE ANALYSIS] AT SER-103; SER-111; SER-559; SER-594; SER-634 AND SER-684</scope>
    <scope>IDENTIFICATION BY MASS SPECTROMETRY [LARGE SCALE ANALYSIS]</scope>
    <source>
        <tissue>Cervix carcinoma</tissue>
    </source>
</reference>
<reference key="14">
    <citation type="journal article" date="2009" name="Anal. Chem.">
        <title>Lys-N and trypsin cover complementary parts of the phosphoproteome in a refined SCX-based approach.</title>
        <authorList>
            <person name="Gauci S."/>
            <person name="Helbig A.O."/>
            <person name="Slijper M."/>
            <person name="Krijgsveld J."/>
            <person name="Heck A.J."/>
            <person name="Mohammed S."/>
        </authorList>
    </citation>
    <scope>ACETYLATION [LARGE SCALE ANALYSIS] AT MET-1</scope>
    <scope>IDENTIFICATION BY MASS SPECTROMETRY [LARGE SCALE ANALYSIS]</scope>
</reference>
<reference key="15">
    <citation type="journal article" date="2009" name="Mol. Cell. Proteomics">
        <title>Large-scale proteomics analysis of the human kinome.</title>
        <authorList>
            <person name="Oppermann F.S."/>
            <person name="Gnad F."/>
            <person name="Olsen J.V."/>
            <person name="Hornberger R."/>
            <person name="Greff Z."/>
            <person name="Keri G."/>
            <person name="Mann M."/>
            <person name="Daub H."/>
        </authorList>
    </citation>
    <scope>PHOSPHORYLATION [LARGE SCALE ANALYSIS] AT SER-111 AND SER-594</scope>
    <scope>IDENTIFICATION BY MASS SPECTROMETRY [LARGE SCALE ANALYSIS]</scope>
</reference>
<reference key="16">
    <citation type="journal article" date="2009" name="Sci. Signal.">
        <title>Quantitative phosphoproteomic analysis of T cell receptor signaling reveals system-wide modulation of protein-protein interactions.</title>
        <authorList>
            <person name="Mayya V."/>
            <person name="Lundgren D.H."/>
            <person name="Hwang S.-I."/>
            <person name="Rezaul K."/>
            <person name="Wu L."/>
            <person name="Eng J.K."/>
            <person name="Rodionov V."/>
            <person name="Han D.K."/>
        </authorList>
    </citation>
    <scope>PHOSPHORYLATION [LARGE SCALE ANALYSIS] AT SER-111; TYR-118; SER-238; SER-558; SER-559 AND SER-594</scope>
    <scope>IDENTIFICATION BY MASS SPECTROMETRY [LARGE SCALE ANALYSIS]</scope>
    <source>
        <tissue>Leukemic T-cell</tissue>
    </source>
</reference>
<reference key="17">
    <citation type="journal article" date="2010" name="Sci. Signal.">
        <title>Quantitative phosphoproteomics reveals widespread full phosphorylation site occupancy during mitosis.</title>
        <authorList>
            <person name="Olsen J.V."/>
            <person name="Vermeulen M."/>
            <person name="Santamaria A."/>
            <person name="Kumar C."/>
            <person name="Miller M.L."/>
            <person name="Jensen L.J."/>
            <person name="Gnad F."/>
            <person name="Cox J."/>
            <person name="Jensen T.S."/>
            <person name="Nigg E.A."/>
            <person name="Brunak S."/>
            <person name="Mann M."/>
        </authorList>
    </citation>
    <scope>PHOSPHORYLATION [LARGE SCALE ANALYSIS] AT SER-111; SER-335; SER-339; SER-409; SER-449; SER-493; SER-496; SER-559 AND SER-594</scope>
    <scope>IDENTIFICATION BY MASS SPECTROMETRY [LARGE SCALE ANALYSIS]</scope>
    <source>
        <tissue>Cervix carcinoma</tissue>
    </source>
</reference>
<reference key="18">
    <citation type="journal article" date="2011" name="BMC Syst. Biol.">
        <title>Initial characterization of the human central proteome.</title>
        <authorList>
            <person name="Burkard T.R."/>
            <person name="Planyavsky M."/>
            <person name="Kaupe I."/>
            <person name="Breitwieser F.P."/>
            <person name="Buerckstuemmer T."/>
            <person name="Bennett K.L."/>
            <person name="Superti-Furga G."/>
            <person name="Colinge J."/>
        </authorList>
    </citation>
    <scope>IDENTIFICATION BY MASS SPECTROMETRY [LARGE SCALE ANALYSIS]</scope>
</reference>
<reference key="19">
    <citation type="journal article" date="2011" name="Sci. Signal.">
        <title>System-wide temporal characterization of the proteome and phosphoproteome of human embryonic stem cell differentiation.</title>
        <authorList>
            <person name="Rigbolt K.T."/>
            <person name="Prokhorova T.A."/>
            <person name="Akimov V."/>
            <person name="Henningsen J."/>
            <person name="Johansen P.T."/>
            <person name="Kratchmarova I."/>
            <person name="Kassem M."/>
            <person name="Mann M."/>
            <person name="Olsen J.V."/>
            <person name="Blagoev B."/>
        </authorList>
    </citation>
    <scope>PHOSPHORYLATION [LARGE SCALE ANALYSIS] AT SER-111; SER-409; SER-496 AND SER-594</scope>
    <scope>IDENTIFICATION BY MASS SPECTROMETRY [LARGE SCALE ANALYSIS]</scope>
</reference>
<reference key="20">
    <citation type="journal article" date="2012" name="PLoS ONE">
        <title>Ataxin-2-like is a regulator of stress granules and processing bodies.</title>
        <authorList>
            <person name="Kaehler C."/>
            <person name="Isensee J."/>
            <person name="Nonhoff U."/>
            <person name="Terrey M."/>
            <person name="Hucho T."/>
            <person name="Lehrach H."/>
            <person name="Krobitsch S."/>
        </authorList>
    </citation>
    <scope>FUNCTION</scope>
    <scope>INTERACTION WITH ATXN2; DDX6 AND G3BP1</scope>
    <scope>SUBCELLULAR LOCATION</scope>
</reference>
<reference key="21">
    <citation type="journal article" date="2012" name="Proc. Natl. Acad. Sci. U.S.A.">
        <title>N-terminal acetylome analyses and functional insights of the N-terminal acetyltransferase NatB.</title>
        <authorList>
            <person name="Van Damme P."/>
            <person name="Lasa M."/>
            <person name="Polevoda B."/>
            <person name="Gazquez C."/>
            <person name="Elosegui-Artola A."/>
            <person name="Kim D.S."/>
            <person name="De Juan-Pardo E."/>
            <person name="Demeyer K."/>
            <person name="Hole K."/>
            <person name="Larrea E."/>
            <person name="Timmerman E."/>
            <person name="Prieto J."/>
            <person name="Arnesen T."/>
            <person name="Sherman F."/>
            <person name="Gevaert K."/>
            <person name="Aldabe R."/>
        </authorList>
    </citation>
    <scope>ACETYLATION [LARGE SCALE ANALYSIS] AT MET-1</scope>
    <scope>IDENTIFICATION BY MASS SPECTROMETRY [LARGE SCALE ANALYSIS]</scope>
</reference>
<reference key="22">
    <citation type="journal article" date="2013" name="J. Proteome Res.">
        <title>Toward a comprehensive characterization of a human cancer cell phosphoproteome.</title>
        <authorList>
            <person name="Zhou H."/>
            <person name="Di Palma S."/>
            <person name="Preisinger C."/>
            <person name="Peng M."/>
            <person name="Polat A.N."/>
            <person name="Heck A.J."/>
            <person name="Mohammed S."/>
        </authorList>
    </citation>
    <scope>PHOSPHORYLATION [LARGE SCALE ANALYSIS] AT SER-111; SER-306; SER-335; SER-339; SER-391; SER-409; SER-558; SER-559; SER-563; SER-594; SER-674; SER-680 AND SER-684</scope>
    <scope>IDENTIFICATION BY MASS SPECTROMETRY [LARGE SCALE ANALYSIS]</scope>
    <source>
        <tissue>Cervix carcinoma</tissue>
        <tissue>Erythroleukemia</tissue>
    </source>
</reference>
<reference key="23">
    <citation type="journal article" date="2014" name="J. Proteomics">
        <title>An enzyme assisted RP-RPLC approach for in-depth analysis of human liver phosphoproteome.</title>
        <authorList>
            <person name="Bian Y."/>
            <person name="Song C."/>
            <person name="Cheng K."/>
            <person name="Dong M."/>
            <person name="Wang F."/>
            <person name="Huang J."/>
            <person name="Sun D."/>
            <person name="Wang L."/>
            <person name="Ye M."/>
            <person name="Zou H."/>
        </authorList>
    </citation>
    <scope>PHOSPHORYLATION [LARGE SCALE ANALYSIS] AT SER-594 AND THR-632</scope>
    <scope>IDENTIFICATION BY MASS SPECTROMETRY [LARGE SCALE ANALYSIS]</scope>
    <source>
        <tissue>Liver</tissue>
    </source>
</reference>
<reference key="24">
    <citation type="journal article" date="2015" name="Exp. Cell Res.">
        <title>PRMT1-mediated arginine methylation controls ATXN2L localization.</title>
        <authorList>
            <person name="Kaehler C."/>
            <person name="Guenther A."/>
            <person name="Uhlich A."/>
            <person name="Krobitsch S."/>
        </authorList>
    </citation>
    <scope>INTERACTION WITH PRMT1</scope>
    <scope>SUBCELLULAR LOCATION</scope>
    <scope>METHYLATION AT ARG-361</scope>
    <scope>MUTAGENESIS OF ARG-361 AND ARG-370</scope>
</reference>
<reference key="25">
    <citation type="journal article" date="2015" name="Proteomics">
        <title>N-terminome analysis of the human mitochondrial proteome.</title>
        <authorList>
            <person name="Vaca Jacome A.S."/>
            <person name="Rabilloud T."/>
            <person name="Schaeffer-Reiss C."/>
            <person name="Rompais M."/>
            <person name="Ayoub D."/>
            <person name="Lane L."/>
            <person name="Bairoch A."/>
            <person name="Van Dorsselaer A."/>
            <person name="Carapito C."/>
        </authorList>
    </citation>
    <scope>IDENTIFICATION BY MASS SPECTROMETRY [LARGE SCALE ANALYSIS]</scope>
</reference>
<reference key="26">
    <citation type="journal article" date="2017" name="Nat. Struct. Mol. Biol.">
        <title>Site-specific mapping of the human SUMO proteome reveals co-modification with phosphorylation.</title>
        <authorList>
            <person name="Hendriks I.A."/>
            <person name="Lyon D."/>
            <person name="Young C."/>
            <person name="Jensen L.J."/>
            <person name="Vertegaal A.C."/>
            <person name="Nielsen M.L."/>
        </authorList>
    </citation>
    <scope>SUMOYLATION [LARGE SCALE ANALYSIS] AT LYS-348</scope>
    <scope>IDENTIFICATION BY MASS SPECTROMETRY [LARGE SCALE ANALYSIS]</scope>
</reference>
<evidence type="ECO:0000250" key="1">
    <source>
        <dbReference type="UniProtKB" id="Q7TQH0"/>
    </source>
</evidence>
<evidence type="ECO:0000255" key="2">
    <source>
        <dbReference type="PROSITE-ProRule" id="PRU01346"/>
    </source>
</evidence>
<evidence type="ECO:0000256" key="3">
    <source>
        <dbReference type="SAM" id="MobiDB-lite"/>
    </source>
</evidence>
<evidence type="ECO:0000269" key="4">
    <source>
    </source>
</evidence>
<evidence type="ECO:0000269" key="5">
    <source>
    </source>
</evidence>
<evidence type="ECO:0000269" key="6">
    <source>
    </source>
</evidence>
<evidence type="ECO:0000269" key="7">
    <source ref="7"/>
</evidence>
<evidence type="ECO:0000303" key="8">
    <source>
    </source>
</evidence>
<evidence type="ECO:0000303" key="9">
    <source>
    </source>
</evidence>
<evidence type="ECO:0000303" key="10">
    <source>
    </source>
</evidence>
<evidence type="ECO:0000303" key="11">
    <source>
    </source>
</evidence>
<evidence type="ECO:0000303" key="12">
    <source ref="3"/>
</evidence>
<evidence type="ECO:0000305" key="13"/>
<evidence type="ECO:0007744" key="14">
    <source>
    </source>
</evidence>
<evidence type="ECO:0007744" key="15">
    <source>
    </source>
</evidence>
<evidence type="ECO:0007744" key="16">
    <source>
    </source>
</evidence>
<evidence type="ECO:0007744" key="17">
    <source>
    </source>
</evidence>
<evidence type="ECO:0007744" key="18">
    <source>
    </source>
</evidence>
<evidence type="ECO:0007744" key="19">
    <source>
    </source>
</evidence>
<evidence type="ECO:0007744" key="20">
    <source>
    </source>
</evidence>
<evidence type="ECO:0007744" key="21">
    <source>
    </source>
</evidence>
<evidence type="ECO:0007744" key="22">
    <source>
    </source>
</evidence>
<evidence type="ECO:0007744" key="23">
    <source>
    </source>
</evidence>
<evidence type="ECO:0007744" key="24">
    <source>
    </source>
</evidence>
<evidence type="ECO:0007744" key="25">
    <source>
    </source>
</evidence>
<evidence type="ECO:0007744" key="26">
    <source>
    </source>
</evidence>
<evidence type="ECO:0007744" key="27">
    <source>
    </source>
</evidence>
<accession>Q8WWM7</accession>
<accession>A8K1R6</accession>
<accession>B9EGM2</accession>
<accession>E9PAR9</accession>
<accession>O95135</accession>
<accession>Q63ZY4</accession>
<accession>Q6NVJ8</accession>
<accession>Q6PJW6</accession>
<accession>Q8IU61</accession>
<accession>Q8IU95</accession>
<accession>Q8WWM3</accession>
<accession>Q8WWM4</accession>
<accession>Q8WWM5</accession>
<accession>Q8WWM6</accession>
<accession>Q99703</accession>
<comment type="function">
    <text evidence="5">Involved in the regulation of stress granule and P-body formation.</text>
</comment>
<comment type="subunit">
    <text evidence="1 4 5 6">Interacts with MPL/TPOR and EPOR and dissociates after ligand stimulation (PubMed:11784712). Interacts with DDX6, G3BP1, and ATXN2 (PubMed:23209657). Interacts with PRMT1 (PubMed:25748791). Interacts with CIC and ATXN1 (By similarity).</text>
</comment>
<comment type="interaction">
    <interactant intactId="EBI-948363">
        <id>Q8WWM7</id>
    </interactant>
    <interactant intactId="EBI-617321">
        <id>P19235</id>
        <label>EPOR</label>
    </interactant>
    <organismsDiffer>false</organismsDiffer>
    <experiments>2</experiments>
</comment>
<comment type="interaction">
    <interactant intactId="EBI-948363">
        <id>Q8WWM7</id>
    </interactant>
    <interactant intactId="EBI-1047359">
        <id>Q13283</id>
        <label>G3BP1</label>
    </interactant>
    <organismsDiffer>false</organismsDiffer>
    <experiments>6</experiments>
</comment>
<comment type="interaction">
    <interactant intactId="EBI-12053753">
        <id>Q8WWM7-9</id>
    </interactant>
    <interactant intactId="EBI-11983447">
        <id>Q8N9W6-4</id>
        <label>BOLL</label>
    </interactant>
    <organismsDiffer>false</organismsDiffer>
    <experiments>3</experiments>
</comment>
<comment type="interaction">
    <interactant intactId="EBI-12053753">
        <id>Q8WWM7-9</id>
    </interactant>
    <interactant intactId="EBI-10176396">
        <id>P60329</id>
        <label>KRTAP12-4</label>
    </interactant>
    <organismsDiffer>false</organismsDiffer>
    <experiments>3</experiments>
</comment>
<comment type="subcellular location">
    <subcellularLocation>
        <location evidence="4">Membrane</location>
        <topology evidence="4">Peripheral membrane protein</topology>
    </subcellularLocation>
    <subcellularLocation>
        <location evidence="5">Cytoplasm</location>
    </subcellularLocation>
    <subcellularLocation>
        <location evidence="5">Nucleus speckle</location>
    </subcellularLocation>
    <subcellularLocation>
        <location evidence="5">Cytoplasmic granule</location>
    </subcellularLocation>
    <text evidence="5 6">Predominantly cytoplasmic but is also detected in nuclear speckles (PubMed:23209657). Component of cytoplasmic stress granules (PubMed:23209657). Inhibition of methylation alters nuclear localization (PubMed:25748791). Methylation does not seem to be required for localization to stress granules under stress conditions (PubMed:25748791).</text>
</comment>
<comment type="alternative products">
    <event type="alternative splicing"/>
    <isoform>
        <id>Q8WWM7-1</id>
        <name>1</name>
        <name>A2D-A</name>
        <sequence type="displayed"/>
    </isoform>
    <isoform>
        <id>Q8WWM7-2</id>
        <name>2</name>
        <name>A2D-B</name>
        <sequence type="described" ref="VSP_011593"/>
    </isoform>
    <isoform>
        <id>Q8WWM7-3</id>
        <name>3</name>
        <name>A2D-C</name>
        <sequence type="described" ref="VSP_011594"/>
    </isoform>
    <isoform>
        <id>Q8WWM7-4</id>
        <name>4</name>
        <name>A2D-D</name>
        <sequence type="described" ref="VSP_011591"/>
    </isoform>
    <isoform>
        <id>Q8WWM7-5</id>
        <name>5</name>
        <name>A2D-E</name>
        <sequence type="described" ref="VSP_011592"/>
    </isoform>
    <isoform>
        <id>Q8WWM7-6</id>
        <name>6</name>
        <sequence type="described" ref="VSP_011589 VSP_011590"/>
    </isoform>
    <isoform>
        <id>Q8WWM7-7</id>
        <name>7</name>
        <sequence type="described" ref="VSP_011587 VSP_011588"/>
    </isoform>
    <isoform>
        <id>Q8WWM7-8</id>
        <name>8</name>
        <sequence type="described" ref="VSP_044243"/>
    </isoform>
    <isoform>
        <id>Q8WWM7-9</id>
        <name>9</name>
        <sequence type="described" ref="VSP_047122"/>
    </isoform>
</comment>
<comment type="tissue specificity">
    <text evidence="4">Expressed at high levels in thymus, lymph node, spleen, fetal kidney and adult testis. Constitutively associated with MPL and EPOR in hematopoietic cells.</text>
</comment>
<comment type="PTM">
    <text evidence="4">Thrombopoietin triggers the phosphorylation on tyrosine residues in a way that is dependent on MPL C-terminal domain.</text>
</comment>
<comment type="PTM">
    <text evidence="6">Asymmetrically dimethylated. Probably methylated by PRMT1.</text>
</comment>
<comment type="miscellaneous">
    <molecule>Isoform 6</molecule>
    <text evidence="13">Due to intron retention.</text>
</comment>
<comment type="similarity">
    <text evidence="13">Belongs to the ataxin-2 family.</text>
</comment>
<comment type="sequence caution" evidence="13">
    <conflict type="frameshift">
        <sequence resource="EMBL-CDS" id="AAC69607"/>
    </conflict>
</comment>
<comment type="sequence caution" evidence="13">
    <conflict type="frameshift">
        <sequence resource="EMBL-CDS" id="AAO12056"/>
    </conflict>
</comment>
<comment type="sequence caution" evidence="13">
    <conflict type="frameshift">
        <sequence resource="EMBL-CDS" id="AAO12057"/>
    </conflict>
</comment>
<comment type="sequence caution" evidence="13">
    <conflict type="frameshift">
        <sequence resource="EMBL-CDS" id="AAO12058"/>
    </conflict>
</comment>
<comment type="sequence caution" evidence="13">
    <conflict type="miscellaneous discrepancy">
        <sequence resource="EMBL-CDS" id="AAO12058"/>
    </conflict>
    <text>Exon duplication.</text>
</comment>
<comment type="sequence caution" evidence="13">
    <conflict type="frameshift">
        <sequence resource="EMBL-CDS" id="AAO12059"/>
    </conflict>
</comment>
<comment type="sequence caution" evidence="13">
    <conflict type="miscellaneous discrepancy">
        <sequence resource="EMBL-CDS" id="AAO12059"/>
    </conflict>
    <text>Exon duplication.</text>
</comment>
<comment type="sequence caution" evidence="13">
    <conflict type="frameshift">
        <sequence resource="EMBL-CDS" id="AAO12060"/>
    </conflict>
</comment>
<comment type="sequence caution" evidence="13">
    <conflict type="miscellaneous discrepancy">
        <sequence resource="EMBL-CDS" id="AAO12060"/>
    </conflict>
    <text>Exon duplication.</text>
</comment>
<dbReference type="EMBL" id="AJ317970">
    <property type="protein sequence ID" value="CAC38068.1"/>
    <property type="molecule type" value="mRNA"/>
</dbReference>
<dbReference type="EMBL" id="AJ317971">
    <property type="protein sequence ID" value="CAC38069.3"/>
    <property type="molecule type" value="mRNA"/>
</dbReference>
<dbReference type="EMBL" id="AJ317972">
    <property type="protein sequence ID" value="CAC38070.3"/>
    <property type="molecule type" value="mRNA"/>
</dbReference>
<dbReference type="EMBL" id="AJ317973">
    <property type="protein sequence ID" value="CAC38071.3"/>
    <property type="molecule type" value="mRNA"/>
</dbReference>
<dbReference type="EMBL" id="AJ317974">
    <property type="protein sequence ID" value="CAC38072.3"/>
    <property type="molecule type" value="mRNA"/>
</dbReference>
<dbReference type="EMBL" id="AY188334">
    <property type="protein sequence ID" value="AAO12056.1"/>
    <property type="status" value="ALT_FRAME"/>
    <property type="molecule type" value="mRNA"/>
</dbReference>
<dbReference type="EMBL" id="AY188335">
    <property type="protein sequence ID" value="AAO12057.1"/>
    <property type="status" value="ALT_FRAME"/>
    <property type="molecule type" value="mRNA"/>
</dbReference>
<dbReference type="EMBL" id="AY188336">
    <property type="protein sequence ID" value="AAO12058.1"/>
    <property type="status" value="ALT_SEQ"/>
    <property type="molecule type" value="mRNA"/>
</dbReference>
<dbReference type="EMBL" id="AY188337">
    <property type="protein sequence ID" value="AAO12059.1"/>
    <property type="status" value="ALT_SEQ"/>
    <property type="molecule type" value="mRNA"/>
</dbReference>
<dbReference type="EMBL" id="AY188338">
    <property type="protein sequence ID" value="AAO12060.1"/>
    <property type="status" value="ALT_SEQ"/>
    <property type="molecule type" value="mRNA"/>
</dbReference>
<dbReference type="EMBL" id="AF034373">
    <property type="protein sequence ID" value="AAC69607.1"/>
    <property type="status" value="ALT_FRAME"/>
    <property type="molecule type" value="mRNA"/>
</dbReference>
<dbReference type="EMBL" id="AK289981">
    <property type="protein sequence ID" value="BAF82670.1"/>
    <property type="molecule type" value="mRNA"/>
</dbReference>
<dbReference type="EMBL" id="AC116346">
    <property type="status" value="NOT_ANNOTATED_CDS"/>
    <property type="molecule type" value="Genomic_DNA"/>
</dbReference>
<dbReference type="EMBL" id="AC133550">
    <property type="status" value="NOT_ANNOTATED_CDS"/>
    <property type="molecule type" value="Genomic_DNA"/>
</dbReference>
<dbReference type="EMBL" id="AC145285">
    <property type="status" value="NOT_ANNOTATED_CDS"/>
    <property type="molecule type" value="Genomic_DNA"/>
</dbReference>
<dbReference type="EMBL" id="BC010239">
    <property type="protein sequence ID" value="AAH10239.1"/>
    <property type="molecule type" value="mRNA"/>
</dbReference>
<dbReference type="EMBL" id="BC068012">
    <property type="protein sequence ID" value="AAH68012.1"/>
    <property type="status" value="ALT_SEQ"/>
    <property type="molecule type" value="mRNA"/>
</dbReference>
<dbReference type="EMBL" id="BC082760">
    <property type="protein sequence ID" value="AAH82760.1"/>
    <property type="molecule type" value="mRNA"/>
</dbReference>
<dbReference type="EMBL" id="BC136584">
    <property type="protein sequence ID" value="AAI36585.1"/>
    <property type="molecule type" value="mRNA"/>
</dbReference>
<dbReference type="EMBL" id="U70671">
    <property type="protein sequence ID" value="AAB19201.1"/>
    <property type="molecule type" value="mRNA"/>
</dbReference>
<dbReference type="CCDS" id="CCDS10639.1">
    <molecule id="Q8WWM7-4"/>
</dbReference>
<dbReference type="CCDS" id="CCDS10640.1">
    <molecule id="Q8WWM7-3"/>
</dbReference>
<dbReference type="CCDS" id="CCDS10641.1">
    <molecule id="Q8WWM7-1"/>
</dbReference>
<dbReference type="CCDS" id="CCDS32423.1">
    <molecule id="Q8WWM7-2"/>
</dbReference>
<dbReference type="CCDS" id="CCDS45451.1">
    <molecule id="Q8WWM7-8"/>
</dbReference>
<dbReference type="CCDS" id="CCDS58443.1">
    <molecule id="Q8WWM7-9"/>
</dbReference>
<dbReference type="RefSeq" id="NP_001374096.1">
    <molecule id="Q8WWM7-3"/>
    <property type="nucleotide sequence ID" value="NM_001387167.1"/>
</dbReference>
<dbReference type="RefSeq" id="NP_001374097.1">
    <molecule id="Q8WWM7-3"/>
    <property type="nucleotide sequence ID" value="NM_001387168.1"/>
</dbReference>
<dbReference type="RefSeq" id="NP_009176.2">
    <molecule id="Q8WWM7-1"/>
    <property type="nucleotide sequence ID" value="NM_007245.3"/>
</dbReference>
<dbReference type="RefSeq" id="NP_059867.3">
    <molecule id="Q8WWM7-9"/>
    <property type="nucleotide sequence ID" value="NM_017492.3"/>
</dbReference>
<dbReference type="RefSeq" id="NP_663760.1">
    <molecule id="Q8WWM7-2"/>
    <property type="nucleotide sequence ID" value="NM_145714.3"/>
</dbReference>
<dbReference type="RefSeq" id="NP_680780.1">
    <molecule id="Q8WWM7-3"/>
    <property type="nucleotide sequence ID" value="NM_148414.3"/>
</dbReference>
<dbReference type="RefSeq" id="NP_680781.1">
    <molecule id="Q8WWM7-4"/>
    <property type="nucleotide sequence ID" value="NM_148415.3"/>
</dbReference>
<dbReference type="RefSeq" id="NP_680782.1">
    <molecule id="Q8WWM7-8"/>
    <property type="nucleotide sequence ID" value="NM_148416.3"/>
</dbReference>
<dbReference type="RefSeq" id="XP_005255123.1">
    <property type="nucleotide sequence ID" value="XM_005255066.1"/>
</dbReference>
<dbReference type="SMR" id="Q8WWM7"/>
<dbReference type="BioGRID" id="116429">
    <property type="interactions" value="284"/>
</dbReference>
<dbReference type="FunCoup" id="Q8WWM7">
    <property type="interactions" value="2645"/>
</dbReference>
<dbReference type="IntAct" id="Q8WWM7">
    <property type="interactions" value="116"/>
</dbReference>
<dbReference type="MINT" id="Q8WWM7"/>
<dbReference type="STRING" id="9606.ENSP00000378917"/>
<dbReference type="GlyConnect" id="2892">
    <property type="glycosylation" value="1 O-GlcNAc glycan (2 sites)"/>
</dbReference>
<dbReference type="GlyCosmos" id="Q8WWM7">
    <property type="glycosylation" value="9 sites, 1 glycan"/>
</dbReference>
<dbReference type="GlyGen" id="Q8WWM7">
    <property type="glycosylation" value="21 sites, 2 N-linked glycans (2 sites), 1 O-linked glycan (18 sites)"/>
</dbReference>
<dbReference type="iPTMnet" id="Q8WWM7"/>
<dbReference type="MetOSite" id="Q8WWM7"/>
<dbReference type="PhosphoSitePlus" id="Q8WWM7"/>
<dbReference type="SwissPalm" id="Q8WWM7"/>
<dbReference type="BioMuta" id="ATXN2L"/>
<dbReference type="DMDM" id="52000729"/>
<dbReference type="jPOST" id="Q8WWM7"/>
<dbReference type="MassIVE" id="Q8WWM7"/>
<dbReference type="PaxDb" id="9606-ENSP00000378917"/>
<dbReference type="PeptideAtlas" id="Q8WWM7"/>
<dbReference type="ProteomicsDB" id="1849"/>
<dbReference type="ProteomicsDB" id="65904"/>
<dbReference type="ProteomicsDB" id="74906">
    <molecule id="Q8WWM7-1"/>
</dbReference>
<dbReference type="ProteomicsDB" id="74907">
    <molecule id="Q8WWM7-2"/>
</dbReference>
<dbReference type="ProteomicsDB" id="74908">
    <molecule id="Q8WWM7-3"/>
</dbReference>
<dbReference type="ProteomicsDB" id="74909">
    <molecule id="Q8WWM7-4"/>
</dbReference>
<dbReference type="ProteomicsDB" id="74910">
    <molecule id="Q8WWM7-5"/>
</dbReference>
<dbReference type="ProteomicsDB" id="74911">
    <molecule id="Q8WWM7-6"/>
</dbReference>
<dbReference type="ProteomicsDB" id="74912">
    <molecule id="Q8WWM7-7"/>
</dbReference>
<dbReference type="Pumba" id="Q8WWM7"/>
<dbReference type="Antibodypedia" id="26552">
    <property type="antibodies" value="127 antibodies from 24 providers"/>
</dbReference>
<dbReference type="Ensembl" id="ENST00000325215.10">
    <molecule id="Q8WWM7-2"/>
    <property type="protein sequence ID" value="ENSP00000315650.6"/>
    <property type="gene ID" value="ENSG00000168488.19"/>
</dbReference>
<dbReference type="Ensembl" id="ENST00000336783.9">
    <molecule id="Q8WWM7-1"/>
    <property type="protein sequence ID" value="ENSP00000338718.4"/>
    <property type="gene ID" value="ENSG00000168488.19"/>
</dbReference>
<dbReference type="Ensembl" id="ENST00000340394.12">
    <molecule id="Q8WWM7-4"/>
    <property type="protein sequence ID" value="ENSP00000341459.8"/>
    <property type="gene ID" value="ENSG00000168488.19"/>
</dbReference>
<dbReference type="Ensembl" id="ENST00000382686.8">
    <molecule id="Q8WWM7-8"/>
    <property type="protein sequence ID" value="ENSP00000372133.4"/>
    <property type="gene ID" value="ENSG00000168488.19"/>
</dbReference>
<dbReference type="Ensembl" id="ENST00000395547.6">
    <molecule id="Q8WWM7-3"/>
    <property type="protein sequence ID" value="ENSP00000378917.2"/>
    <property type="gene ID" value="ENSG00000168488.19"/>
</dbReference>
<dbReference type="Ensembl" id="ENST00000570200.5">
    <molecule id="Q8WWM7-9"/>
    <property type="protein sequence ID" value="ENSP00000454516.1"/>
    <property type="gene ID" value="ENSG00000168488.19"/>
</dbReference>
<dbReference type="GeneID" id="11273"/>
<dbReference type="KEGG" id="hsa:11273"/>
<dbReference type="MANE-Select" id="ENST00000336783.9">
    <property type="protein sequence ID" value="ENSP00000338718.4"/>
    <property type="RefSeq nucleotide sequence ID" value="NM_007245.4"/>
    <property type="RefSeq protein sequence ID" value="NP_009176.2"/>
</dbReference>
<dbReference type="UCSC" id="uc002dqy.5">
    <molecule id="Q8WWM7-1"/>
    <property type="organism name" value="human"/>
</dbReference>
<dbReference type="AGR" id="HGNC:31326"/>
<dbReference type="CTD" id="11273"/>
<dbReference type="DisGeNET" id="11273"/>
<dbReference type="GeneCards" id="ATXN2L"/>
<dbReference type="HGNC" id="HGNC:31326">
    <property type="gene designation" value="ATXN2L"/>
</dbReference>
<dbReference type="HPA" id="ENSG00000168488">
    <property type="expression patterns" value="Low tissue specificity"/>
</dbReference>
<dbReference type="MIM" id="607931">
    <property type="type" value="gene"/>
</dbReference>
<dbReference type="neXtProt" id="NX_Q8WWM7"/>
<dbReference type="OpenTargets" id="ENSG00000168488"/>
<dbReference type="PharmGKB" id="PA128394585"/>
<dbReference type="VEuPathDB" id="HostDB:ENSG00000168488"/>
<dbReference type="eggNOG" id="KOG2375">
    <property type="taxonomic scope" value="Eukaryota"/>
</dbReference>
<dbReference type="GeneTree" id="ENSGT00940000157795"/>
<dbReference type="HOGENOM" id="CLU_003766_0_0_1"/>
<dbReference type="InParanoid" id="Q8WWM7"/>
<dbReference type="OMA" id="MRVYQDQ"/>
<dbReference type="OrthoDB" id="2275718at2759"/>
<dbReference type="PAN-GO" id="Q8WWM7">
    <property type="GO annotations" value="3 GO annotations based on evolutionary models"/>
</dbReference>
<dbReference type="PhylomeDB" id="Q8WWM7"/>
<dbReference type="TreeFam" id="TF326591"/>
<dbReference type="PathwayCommons" id="Q8WWM7"/>
<dbReference type="SignaLink" id="Q8WWM7"/>
<dbReference type="SIGNOR" id="Q8WWM7"/>
<dbReference type="BioGRID-ORCS" id="11273">
    <property type="hits" value="57 hits in 1162 CRISPR screens"/>
</dbReference>
<dbReference type="CD-CODE" id="232F8A39">
    <property type="entry name" value="P-body"/>
</dbReference>
<dbReference type="CD-CODE" id="804901D1">
    <property type="entry name" value="Nuclear speckle"/>
</dbReference>
<dbReference type="CD-CODE" id="DEE660B4">
    <property type="entry name" value="Stress granule"/>
</dbReference>
<dbReference type="ChiTaRS" id="ATXN2L">
    <property type="organism name" value="human"/>
</dbReference>
<dbReference type="GeneWiki" id="ATXN2L"/>
<dbReference type="GenomeRNAi" id="11273"/>
<dbReference type="Pharos" id="Q8WWM7">
    <property type="development level" value="Tbio"/>
</dbReference>
<dbReference type="PRO" id="PR:Q8WWM7"/>
<dbReference type="Proteomes" id="UP000005640">
    <property type="component" value="Chromosome 16"/>
</dbReference>
<dbReference type="RNAct" id="Q8WWM7">
    <property type="molecule type" value="protein"/>
</dbReference>
<dbReference type="Bgee" id="ENSG00000168488">
    <property type="expression patterns" value="Expressed in left testis and 184 other cell types or tissues"/>
</dbReference>
<dbReference type="ExpressionAtlas" id="Q8WWM7">
    <property type="expression patterns" value="baseline and differential"/>
</dbReference>
<dbReference type="GO" id="GO:0010494">
    <property type="term" value="C:cytoplasmic stress granule"/>
    <property type="evidence" value="ECO:0000314"/>
    <property type="project" value="UniProtKB"/>
</dbReference>
<dbReference type="GO" id="GO:0005829">
    <property type="term" value="C:cytosol"/>
    <property type="evidence" value="ECO:0000314"/>
    <property type="project" value="HPA"/>
</dbReference>
<dbReference type="GO" id="GO:0016020">
    <property type="term" value="C:membrane"/>
    <property type="evidence" value="ECO:0000314"/>
    <property type="project" value="MGI"/>
</dbReference>
<dbReference type="GO" id="GO:0016607">
    <property type="term" value="C:nuclear speck"/>
    <property type="evidence" value="ECO:0000314"/>
    <property type="project" value="UniProtKB"/>
</dbReference>
<dbReference type="GO" id="GO:0045296">
    <property type="term" value="F:cadherin binding"/>
    <property type="evidence" value="ECO:0007005"/>
    <property type="project" value="BHF-UCL"/>
</dbReference>
<dbReference type="GO" id="GO:0003729">
    <property type="term" value="F:mRNA binding"/>
    <property type="evidence" value="ECO:0000318"/>
    <property type="project" value="GO_Central"/>
</dbReference>
<dbReference type="GO" id="GO:0003723">
    <property type="term" value="F:RNA binding"/>
    <property type="evidence" value="ECO:0007005"/>
    <property type="project" value="UniProtKB"/>
</dbReference>
<dbReference type="GO" id="GO:0016071">
    <property type="term" value="P:mRNA metabolic process"/>
    <property type="evidence" value="ECO:0000315"/>
    <property type="project" value="UniProtKB"/>
</dbReference>
<dbReference type="GO" id="GO:0034063">
    <property type="term" value="P:stress granule assembly"/>
    <property type="evidence" value="ECO:0000318"/>
    <property type="project" value="GO_Central"/>
</dbReference>
<dbReference type="InterPro" id="IPR045117">
    <property type="entry name" value="ATXN2-like"/>
</dbReference>
<dbReference type="InterPro" id="IPR009604">
    <property type="entry name" value="LsmAD_domain"/>
</dbReference>
<dbReference type="InterPro" id="IPR009818">
    <property type="entry name" value="PAM2_motif"/>
</dbReference>
<dbReference type="InterPro" id="IPR047575">
    <property type="entry name" value="Sm"/>
</dbReference>
<dbReference type="InterPro" id="IPR025852">
    <property type="entry name" value="SM_dom_ATX"/>
</dbReference>
<dbReference type="PANTHER" id="PTHR12854">
    <property type="entry name" value="ATAXIN 2-RELATED"/>
    <property type="match status" value="1"/>
</dbReference>
<dbReference type="PANTHER" id="PTHR12854:SF8">
    <property type="entry name" value="ATAXIN-2-LIKE PROTEIN"/>
    <property type="match status" value="1"/>
</dbReference>
<dbReference type="Pfam" id="PF06741">
    <property type="entry name" value="LsmAD"/>
    <property type="match status" value="1"/>
</dbReference>
<dbReference type="Pfam" id="PF07145">
    <property type="entry name" value="PAM2"/>
    <property type="match status" value="1"/>
</dbReference>
<dbReference type="Pfam" id="PF14438">
    <property type="entry name" value="SM-ATX"/>
    <property type="match status" value="1"/>
</dbReference>
<dbReference type="SMART" id="SM01272">
    <property type="entry name" value="LsmAD"/>
    <property type="match status" value="1"/>
</dbReference>
<dbReference type="PROSITE" id="PS52002">
    <property type="entry name" value="SM"/>
    <property type="match status" value="1"/>
</dbReference>
<feature type="chain" id="PRO_0000064754" description="Ataxin-2-like protein">
    <location>
        <begin position="1"/>
        <end position="1075"/>
    </location>
</feature>
<feature type="domain" description="Sm" evidence="2">
    <location>
        <begin position="122"/>
        <end position="199"/>
    </location>
</feature>
<feature type="region of interest" description="Disordered" evidence="3">
    <location>
        <begin position="1"/>
        <end position="115"/>
    </location>
</feature>
<feature type="region of interest" description="Interaction with MPL" evidence="4">
    <location>
        <begin position="98"/>
        <end position="121"/>
    </location>
</feature>
<feature type="region of interest" description="Disordered" evidence="3">
    <location>
        <begin position="316"/>
        <end position="521"/>
    </location>
</feature>
<feature type="region of interest" description="Disordered" evidence="3">
    <location>
        <begin position="551"/>
        <end position="697"/>
    </location>
</feature>
<feature type="region of interest" description="Disordered" evidence="3">
    <location>
        <begin position="733"/>
        <end position="770"/>
    </location>
</feature>
<feature type="region of interest" description="Disordered" evidence="3">
    <location>
        <begin position="820"/>
        <end position="849"/>
    </location>
</feature>
<feature type="region of interest" description="Disordered" evidence="3">
    <location>
        <begin position="865"/>
        <end position="940"/>
    </location>
</feature>
<feature type="region of interest" description="Disordered" evidence="3">
    <location>
        <begin position="1022"/>
        <end position="1045"/>
    </location>
</feature>
<feature type="compositionally biased region" description="Low complexity" evidence="3">
    <location>
        <begin position="1"/>
        <end position="12"/>
    </location>
</feature>
<feature type="compositionally biased region" description="Basic and acidic residues" evidence="3">
    <location>
        <begin position="316"/>
        <end position="328"/>
    </location>
</feature>
<feature type="compositionally biased region" description="Polar residues" evidence="3">
    <location>
        <begin position="330"/>
        <end position="342"/>
    </location>
</feature>
<feature type="compositionally biased region" description="Low complexity" evidence="3">
    <location>
        <begin position="363"/>
        <end position="380"/>
    </location>
</feature>
<feature type="compositionally biased region" description="Polar residues" evidence="3">
    <location>
        <begin position="421"/>
        <end position="433"/>
    </location>
</feature>
<feature type="compositionally biased region" description="Low complexity" evidence="3">
    <location>
        <begin position="450"/>
        <end position="462"/>
    </location>
</feature>
<feature type="compositionally biased region" description="Low complexity" evidence="3">
    <location>
        <begin position="471"/>
        <end position="485"/>
    </location>
</feature>
<feature type="compositionally biased region" description="Basic and acidic residues" evidence="3">
    <location>
        <begin position="505"/>
        <end position="516"/>
    </location>
</feature>
<feature type="compositionally biased region" description="Basic and acidic residues" evidence="3">
    <location>
        <begin position="571"/>
        <end position="584"/>
    </location>
</feature>
<feature type="compositionally biased region" description="Low complexity" evidence="3">
    <location>
        <begin position="678"/>
        <end position="694"/>
    </location>
</feature>
<feature type="compositionally biased region" description="Low complexity" evidence="3">
    <location>
        <begin position="761"/>
        <end position="770"/>
    </location>
</feature>
<feature type="compositionally biased region" description="Polar residues" evidence="3">
    <location>
        <begin position="874"/>
        <end position="898"/>
    </location>
</feature>
<feature type="compositionally biased region" description="Low complexity" evidence="3">
    <location>
        <begin position="931"/>
        <end position="940"/>
    </location>
</feature>
<feature type="compositionally biased region" description="Low complexity" evidence="3">
    <location>
        <begin position="1025"/>
        <end position="1037"/>
    </location>
</feature>
<feature type="modified residue" description="N-acetylmethionine" evidence="7 20 24">
    <location>
        <position position="1"/>
    </location>
</feature>
<feature type="modified residue" description="Phosphoserine" evidence="18">
    <location>
        <position position="103"/>
    </location>
</feature>
<feature type="modified residue" description="Phosphoserine" evidence="14 15 17 18 19 21 22 23 25">
    <location>
        <position position="111"/>
    </location>
</feature>
<feature type="modified residue" description="Phosphotyrosine" evidence="21">
    <location>
        <position position="118"/>
    </location>
</feature>
<feature type="modified residue" description="N6-acetyllysine" evidence="1">
    <location>
        <position position="207"/>
    </location>
</feature>
<feature type="modified residue" description="Phosphoserine" evidence="21">
    <location>
        <position position="238"/>
    </location>
</feature>
<feature type="modified residue" description="Phosphotyrosine" evidence="14">
    <location>
        <position position="264"/>
    </location>
</feature>
<feature type="modified residue" description="Phosphoserine" evidence="25">
    <location>
        <position position="306"/>
    </location>
</feature>
<feature type="modified residue" description="Phosphotyrosine" evidence="14">
    <location>
        <position position="309"/>
    </location>
</feature>
<feature type="modified residue" description="Phosphoserine" evidence="22 25">
    <location>
        <position position="335"/>
    </location>
</feature>
<feature type="modified residue" description="Phosphoserine" evidence="22 25">
    <location>
        <position position="339"/>
    </location>
</feature>
<feature type="modified residue" description="Phosphotyrosine" evidence="14">
    <location>
        <position position="349"/>
    </location>
</feature>
<feature type="modified residue" description="Asymmetric dimethylarginine" evidence="6">
    <location>
        <position position="361"/>
    </location>
</feature>
<feature type="modified residue" description="Phosphoserine" evidence="25">
    <location>
        <position position="391"/>
    </location>
</feature>
<feature type="modified residue" description="Phosphoserine" evidence="22 23 25">
    <location>
        <position position="409"/>
    </location>
</feature>
<feature type="modified residue" description="Phosphoserine" evidence="22">
    <location>
        <position position="449"/>
    </location>
</feature>
<feature type="modified residue" description="Phosphoserine" evidence="22">
    <location>
        <position position="493"/>
    </location>
</feature>
<feature type="modified residue" description="Phosphoserine" evidence="16 22 23">
    <location>
        <position position="496"/>
    </location>
</feature>
<feature type="modified residue" description="Phosphoserine" evidence="1">
    <location>
        <position position="557"/>
    </location>
</feature>
<feature type="modified residue" description="Phosphoserine" evidence="21 25">
    <location>
        <position position="558"/>
    </location>
</feature>
<feature type="modified residue" description="Phosphoserine" evidence="18 21 22 25">
    <location>
        <position position="559"/>
    </location>
</feature>
<feature type="modified residue" description="Phosphoserine" evidence="25">
    <location>
        <position position="563"/>
    </location>
</feature>
<feature type="modified residue" description="Phosphoserine" evidence="15 16 18 19 21 22 23 25 26">
    <location>
        <position position="594"/>
    </location>
</feature>
<feature type="modified residue" description="Phosphothreonine" evidence="26">
    <location>
        <position position="632"/>
    </location>
</feature>
<feature type="modified residue" description="Phosphoserine" evidence="18">
    <location>
        <position position="634"/>
    </location>
</feature>
<feature type="modified residue" description="Phosphoserine" evidence="25">
    <location>
        <position position="674"/>
    </location>
</feature>
<feature type="modified residue" description="Phosphoserine" evidence="25">
    <location>
        <position position="680"/>
    </location>
</feature>
<feature type="modified residue" description="Phosphoserine" evidence="18 25">
    <location>
        <position position="684"/>
    </location>
</feature>
<feature type="cross-link" description="Glycyl lysine isopeptide (Lys-Gly) (interchain with G-Cter in SUMO2)" evidence="27">
    <location>
        <position position="348"/>
    </location>
</feature>
<feature type="splice variant" id="VSP_011587" description="In isoform 7." evidence="11">
    <original>QRVREGPRGGVRCSSSRGGRPGLSSLPPRGPHHLDNSSPGPGSEARG</original>
    <variation>HRGQGQGPAGVGGSCSAPARPHPVLPSHPLIYSPAGDGRSFIFYYL</variation>
    <location>
        <begin position="354"/>
        <end position="400"/>
    </location>
</feature>
<feature type="splice variant" id="VSP_011588" description="In isoform 7." evidence="11">
    <location>
        <begin position="401"/>
        <end position="1075"/>
    </location>
</feature>
<feature type="splice variant" id="VSP_011589" description="In isoform 6." evidence="12">
    <original>HQAGQAPHLGSGQPQQNLYHPGALTGTPPSLPPGPSAQSPQSSFPQPAAVYAIHHQQLPHGFTNMAHVTQAH</original>
    <variation>VPAMGGAEWSWCRNGWPEEGIELGVISEWRGLGASELLACVALNLPLPSSIRRGRPHTWAVDSHSRICTTQGP</variation>
    <location>
        <begin position="896"/>
        <end position="967"/>
    </location>
</feature>
<feature type="splice variant" id="VSP_011590" description="In isoform 6." evidence="12">
    <location>
        <begin position="968"/>
        <end position="1075"/>
    </location>
</feature>
<feature type="splice variant" id="VSP_011591" description="In isoform 4." evidence="8 10">
    <original>GEQPGQAPGFPGGADDRIREFSLAGGIWHGRAEGLQVGQDARVLGGE</original>
    <variation>VQSHPSQQLPFHPPGN</variation>
    <location>
        <begin position="1029"/>
        <end position="1075"/>
    </location>
</feature>
<feature type="splice variant" id="VSP_011592" description="In isoform 5." evidence="8">
    <original>GEQPGQAPGFPGGADDRIREFSLAGGIWHGRAEGLQVGQDARVLGGE</original>
    <variation>APFPPPGELKIVLAAT</variation>
    <location>
        <begin position="1029"/>
        <end position="1075"/>
    </location>
</feature>
<feature type="splice variant" id="VSP_044243" description="In isoform 8." evidence="9">
    <original>GEQPGQAPGFPGGADDRIREFSLAGGIWHGRAEGLQVGQDARVLGGE</original>
    <variation>APLPPPGELKIVLAAT</variation>
    <location>
        <begin position="1029"/>
        <end position="1075"/>
    </location>
</feature>
<feature type="splice variant" id="VSP_011593" description="In isoform 2." evidence="8">
    <original>REFSLAGGIWHGRAEGLQVGQDARVLGGE</original>
    <variation>PPLPPPGELKIVLAAT</variation>
    <location>
        <begin position="1047"/>
        <end position="1075"/>
    </location>
</feature>
<feature type="splice variant" id="VSP_011594" description="In isoform 3." evidence="8">
    <original>REFSLAGGIWHGRAEGLQVGQDARVLGGE</original>
    <variation>LCRVGRSHSRRRQGLAPGSVLCFPPSSLSCDPAAPLPTASPALSDPDCLLT</variation>
    <location>
        <begin position="1047"/>
        <end position="1075"/>
    </location>
</feature>
<feature type="splice variant" id="VSP_047122" description="In isoform 9." evidence="10">
    <original>REFSLAGGIWHGRAEGLQVGQDARVLGGE</original>
    <variation>LQSHPSQQLPFHPPGN</variation>
    <location>
        <begin position="1047"/>
        <end position="1075"/>
    </location>
</feature>
<feature type="mutagenesis site" description="No effect on localization to stress granules under stress conditions." evidence="6">
    <original>R</original>
    <variation>Q</variation>
    <location>
        <position position="361"/>
    </location>
</feature>
<feature type="mutagenesis site" description="No effect on localization to stress granules under stress conditions." evidence="6">
    <original>R</original>
    <variation>Q</variation>
    <location>
        <position position="370"/>
    </location>
</feature>
<feature type="sequence conflict" description="In Ref. 8; AAB19201." evidence="13" ref="8">
    <original>R</original>
    <variation>RG</variation>
    <location>
        <position position="337"/>
    </location>
</feature>
<feature type="sequence conflict" description="In Ref. 1; CAC38068/CAC38069/CAC38070/CAC38071/CAC38072." evidence="13" ref="1">
    <original>T</original>
    <variation>S</variation>
    <location>
        <position position="689"/>
    </location>
</feature>
<feature type="sequence conflict" description="In Ref. 1; CAC38068/CAC38069/CAC38070/CAC38071/CAC38072." evidence="13" ref="1">
    <original>P</original>
    <variation>T</variation>
    <location>
        <position position="726"/>
    </location>
</feature>
<feature type="sequence conflict" description="In Ref. 6; AAH10239." evidence="13" ref="6">
    <original>Q</original>
    <variation>QQ</variation>
    <location>
        <position position="895"/>
    </location>
</feature>
<feature type="sequence conflict" description="In Ref. 1; CAC38069." evidence="13" ref="1">
    <original>L</original>
    <variation>F</variation>
    <location sequence="Q8WWM7-2">
        <position position="1049"/>
    </location>
</feature>
<protein>
    <recommendedName>
        <fullName>Ataxin-2-like protein</fullName>
    </recommendedName>
    <alternativeName>
        <fullName>Ataxin-2 domain protein</fullName>
    </alternativeName>
    <alternativeName>
        <fullName>Ataxin-2-related protein</fullName>
    </alternativeName>
</protein>
<organism>
    <name type="scientific">Homo sapiens</name>
    <name type="common">Human</name>
    <dbReference type="NCBI Taxonomy" id="9606"/>
    <lineage>
        <taxon>Eukaryota</taxon>
        <taxon>Metazoa</taxon>
        <taxon>Chordata</taxon>
        <taxon>Craniata</taxon>
        <taxon>Vertebrata</taxon>
        <taxon>Euteleostomi</taxon>
        <taxon>Mammalia</taxon>
        <taxon>Eutheria</taxon>
        <taxon>Euarchontoglires</taxon>
        <taxon>Primates</taxon>
        <taxon>Haplorrhini</taxon>
        <taxon>Catarrhini</taxon>
        <taxon>Hominidae</taxon>
        <taxon>Homo</taxon>
    </lineage>
</organism>
<keyword id="KW-0007">Acetylation</keyword>
<keyword id="KW-0025">Alternative splicing</keyword>
<keyword id="KW-0963">Cytoplasm</keyword>
<keyword id="KW-0903">Direct protein sequencing</keyword>
<keyword id="KW-1017">Isopeptide bond</keyword>
<keyword id="KW-0472">Membrane</keyword>
<keyword id="KW-0488">Methylation</keyword>
<keyword id="KW-0539">Nucleus</keyword>
<keyword id="KW-0597">Phosphoprotein</keyword>
<keyword id="KW-1267">Proteomics identification</keyword>
<keyword id="KW-1185">Reference proteome</keyword>
<keyword id="KW-0832">Ubl conjugation</keyword>
<gene>
    <name type="primary">ATXN2L</name>
    <name type="synonym">A2D</name>
    <name type="synonym">A2LG</name>
    <name type="synonym">A2LP</name>
    <name type="synonym">A2RP</name>
</gene>
<name>ATX2L_HUMAN</name>